<protein>
    <recommendedName>
        <fullName evidence="1">Putative pre-16S rRNA nuclease</fullName>
        <ecNumber evidence="1">3.1.-.-</ecNumber>
    </recommendedName>
</protein>
<sequence>MRKLALDLGTKSCGFAISDLLGIIASGLDNFIYEENDFTAVLAKIDEIMINYHHEIDTIVLGYPTNVYDGSKNERTYLIESFYALLKQHFLNHEKIKIVYEDERFSTKIATQRLKNSCVKAAKIKKVKDKMSAVVILESYLSKNHFN</sequence>
<proteinExistence type="inferred from homology"/>
<gene>
    <name type="ordered locus">UPA3_0386</name>
</gene>
<evidence type="ECO:0000255" key="1">
    <source>
        <dbReference type="HAMAP-Rule" id="MF_00651"/>
    </source>
</evidence>
<dbReference type="EC" id="3.1.-.-" evidence="1"/>
<dbReference type="EMBL" id="CP000942">
    <property type="protein sequence ID" value="ACA32742.1"/>
    <property type="molecule type" value="Genomic_DNA"/>
</dbReference>
<dbReference type="SMR" id="B1AJ09"/>
<dbReference type="GeneID" id="29672599"/>
<dbReference type="KEGG" id="upa:UPA3_0386"/>
<dbReference type="HOGENOM" id="CLU_098240_2_2_14"/>
<dbReference type="Proteomes" id="UP000002162">
    <property type="component" value="Chromosome"/>
</dbReference>
<dbReference type="GO" id="GO:0005829">
    <property type="term" value="C:cytosol"/>
    <property type="evidence" value="ECO:0007669"/>
    <property type="project" value="TreeGrafter"/>
</dbReference>
<dbReference type="GO" id="GO:0004518">
    <property type="term" value="F:nuclease activity"/>
    <property type="evidence" value="ECO:0007669"/>
    <property type="project" value="UniProtKB-KW"/>
</dbReference>
<dbReference type="GO" id="GO:0000967">
    <property type="term" value="P:rRNA 5'-end processing"/>
    <property type="evidence" value="ECO:0007669"/>
    <property type="project" value="UniProtKB-UniRule"/>
</dbReference>
<dbReference type="CDD" id="cd16964">
    <property type="entry name" value="YqgF"/>
    <property type="match status" value="1"/>
</dbReference>
<dbReference type="Gene3D" id="3.30.420.140">
    <property type="entry name" value="YqgF/RNase H-like domain"/>
    <property type="match status" value="1"/>
</dbReference>
<dbReference type="HAMAP" id="MF_00651">
    <property type="entry name" value="Nuclease_YqgF"/>
    <property type="match status" value="1"/>
</dbReference>
<dbReference type="InterPro" id="IPR012337">
    <property type="entry name" value="RNaseH-like_sf"/>
</dbReference>
<dbReference type="InterPro" id="IPR005227">
    <property type="entry name" value="YqgF"/>
</dbReference>
<dbReference type="InterPro" id="IPR006641">
    <property type="entry name" value="YqgF/RNaseH-like_dom"/>
</dbReference>
<dbReference type="InterPro" id="IPR037027">
    <property type="entry name" value="YqgF/RNaseH-like_dom_sf"/>
</dbReference>
<dbReference type="NCBIfam" id="TIGR00250">
    <property type="entry name" value="RNAse_H_YqgF"/>
    <property type="match status" value="1"/>
</dbReference>
<dbReference type="PANTHER" id="PTHR33317">
    <property type="entry name" value="POLYNUCLEOTIDYL TRANSFERASE, RIBONUCLEASE H-LIKE SUPERFAMILY PROTEIN"/>
    <property type="match status" value="1"/>
</dbReference>
<dbReference type="PANTHER" id="PTHR33317:SF4">
    <property type="entry name" value="POLYNUCLEOTIDYL TRANSFERASE, RIBONUCLEASE H-LIKE SUPERFAMILY PROTEIN"/>
    <property type="match status" value="1"/>
</dbReference>
<dbReference type="Pfam" id="PF03652">
    <property type="entry name" value="RuvX"/>
    <property type="match status" value="1"/>
</dbReference>
<dbReference type="SMART" id="SM00732">
    <property type="entry name" value="YqgFc"/>
    <property type="match status" value="1"/>
</dbReference>
<dbReference type="SUPFAM" id="SSF53098">
    <property type="entry name" value="Ribonuclease H-like"/>
    <property type="match status" value="1"/>
</dbReference>
<name>YQGF_UREP2</name>
<keyword id="KW-0963">Cytoplasm</keyword>
<keyword id="KW-0378">Hydrolase</keyword>
<keyword id="KW-0540">Nuclease</keyword>
<keyword id="KW-0690">Ribosome biogenesis</keyword>
<accession>B1AJ09</accession>
<reference key="1">
    <citation type="submission" date="2008-02" db="EMBL/GenBank/DDBJ databases">
        <title>Genome sequence of Ureaplasma parvum serovar 3.</title>
        <authorList>
            <person name="Methe B.A."/>
            <person name="Glass J."/>
            <person name="Waites K."/>
            <person name="Shrivastava S."/>
        </authorList>
    </citation>
    <scope>NUCLEOTIDE SEQUENCE [LARGE SCALE GENOMIC DNA]</scope>
    <source>
        <strain>ATCC 27815 / 27 / NCTC 11736</strain>
    </source>
</reference>
<comment type="function">
    <text evidence="1">Could be a nuclease involved in processing of the 5'-end of pre-16S rRNA.</text>
</comment>
<comment type="subcellular location">
    <subcellularLocation>
        <location evidence="1">Cytoplasm</location>
    </subcellularLocation>
</comment>
<comment type="similarity">
    <text evidence="1">Belongs to the YqgF nuclease family.</text>
</comment>
<feature type="chain" id="PRO_1000082760" description="Putative pre-16S rRNA nuclease">
    <location>
        <begin position="1"/>
        <end position="147"/>
    </location>
</feature>
<organism>
    <name type="scientific">Ureaplasma parvum serovar 3 (strain ATCC 27815 / 27 / NCTC 11736)</name>
    <dbReference type="NCBI Taxonomy" id="505682"/>
    <lineage>
        <taxon>Bacteria</taxon>
        <taxon>Bacillati</taxon>
        <taxon>Mycoplasmatota</taxon>
        <taxon>Mycoplasmoidales</taxon>
        <taxon>Mycoplasmoidaceae</taxon>
        <taxon>Ureaplasma</taxon>
    </lineage>
</organism>